<proteinExistence type="inferred from homology"/>
<keyword id="KW-0963">Cytoplasm</keyword>
<keyword id="KW-0378">Hydrolase</keyword>
<keyword id="KW-1185">Reference proteome</keyword>
<protein>
    <recommendedName>
        <fullName evidence="2">Urease subunit beta</fullName>
        <ecNumber evidence="2">3.5.1.5</ecNumber>
    </recommendedName>
    <alternativeName>
        <fullName evidence="2">Urea amidohydrolase subunit beta</fullName>
    </alternativeName>
</protein>
<organism>
    <name type="scientific">Ureaplasma parvum serovar 3 (strain ATCC 700970)</name>
    <dbReference type="NCBI Taxonomy" id="273119"/>
    <lineage>
        <taxon>Bacteria</taxon>
        <taxon>Bacillati</taxon>
        <taxon>Mycoplasmatota</taxon>
        <taxon>Mycoplasmoidales</taxon>
        <taxon>Mycoplasmoidaceae</taxon>
        <taxon>Ureaplasma</taxon>
    </lineage>
</organism>
<comment type="catalytic activity">
    <reaction evidence="2">
        <text>urea + 2 H2O + H(+) = hydrogencarbonate + 2 NH4(+)</text>
        <dbReference type="Rhea" id="RHEA:20557"/>
        <dbReference type="ChEBI" id="CHEBI:15377"/>
        <dbReference type="ChEBI" id="CHEBI:15378"/>
        <dbReference type="ChEBI" id="CHEBI:16199"/>
        <dbReference type="ChEBI" id="CHEBI:17544"/>
        <dbReference type="ChEBI" id="CHEBI:28938"/>
        <dbReference type="EC" id="3.5.1.5"/>
    </reaction>
</comment>
<comment type="pathway">
    <text evidence="2">Nitrogen metabolism; urea degradation; CO(2) and NH(3) from urea (urease route): step 1/1.</text>
</comment>
<comment type="subunit">
    <text evidence="2">Heterotrimer of UreA (gamma), UreB (beta) and UreC (alpha) subunits. Three heterotrimers associate to form the active enzyme.</text>
</comment>
<comment type="subcellular location">
    <subcellularLocation>
        <location evidence="2">Cytoplasm</location>
    </subcellularLocation>
</comment>
<comment type="similarity">
    <text evidence="2">Belongs to the urease beta subunit family.</text>
</comment>
<dbReference type="EC" id="3.5.1.5" evidence="2"/>
<dbReference type="EMBL" id="L40489">
    <property type="protein sequence ID" value="AAA89188.2"/>
    <property type="molecule type" value="Genomic_DNA"/>
</dbReference>
<dbReference type="EMBL" id="AF085730">
    <property type="protein sequence ID" value="AAD28135.1"/>
    <property type="molecule type" value="Genomic_DNA"/>
</dbReference>
<dbReference type="EMBL" id="AF085731">
    <property type="protein sequence ID" value="AAD28138.1"/>
    <property type="molecule type" value="Genomic_DNA"/>
</dbReference>
<dbReference type="EMBL" id="AF085733">
    <property type="protein sequence ID" value="AAD28144.1"/>
    <property type="molecule type" value="Genomic_DNA"/>
</dbReference>
<dbReference type="EMBL" id="AF222894">
    <property type="protein sequence ID" value="AAF30845.1"/>
    <property type="molecule type" value="Genomic_DNA"/>
</dbReference>
<dbReference type="PIR" id="H82890">
    <property type="entry name" value="H82890"/>
</dbReference>
<dbReference type="RefSeq" id="WP_006688518.1">
    <property type="nucleotide sequence ID" value="NC_002162.1"/>
</dbReference>
<dbReference type="SMR" id="P0C7K8"/>
<dbReference type="STRING" id="273119.UU433"/>
<dbReference type="EnsemblBacteria" id="AAF30845">
    <property type="protein sequence ID" value="AAF30845"/>
    <property type="gene ID" value="UU433"/>
</dbReference>
<dbReference type="GeneID" id="29672369"/>
<dbReference type="KEGG" id="uur:UU433"/>
<dbReference type="eggNOG" id="COG0832">
    <property type="taxonomic scope" value="Bacteria"/>
</dbReference>
<dbReference type="HOGENOM" id="CLU_129707_1_1_14"/>
<dbReference type="OrthoDB" id="9797217at2"/>
<dbReference type="UniPathway" id="UPA00258">
    <property type="reaction ID" value="UER00370"/>
</dbReference>
<dbReference type="Proteomes" id="UP000000423">
    <property type="component" value="Chromosome"/>
</dbReference>
<dbReference type="GO" id="GO:0035550">
    <property type="term" value="C:urease complex"/>
    <property type="evidence" value="ECO:0007669"/>
    <property type="project" value="InterPro"/>
</dbReference>
<dbReference type="GO" id="GO:0009039">
    <property type="term" value="F:urease activity"/>
    <property type="evidence" value="ECO:0007669"/>
    <property type="project" value="UniProtKB-UniRule"/>
</dbReference>
<dbReference type="GO" id="GO:0043419">
    <property type="term" value="P:urea catabolic process"/>
    <property type="evidence" value="ECO:0007669"/>
    <property type="project" value="UniProtKB-UniRule"/>
</dbReference>
<dbReference type="CDD" id="cd00407">
    <property type="entry name" value="Urease_beta"/>
    <property type="match status" value="1"/>
</dbReference>
<dbReference type="Gene3D" id="2.10.150.10">
    <property type="entry name" value="Urease, beta subunit"/>
    <property type="match status" value="1"/>
</dbReference>
<dbReference type="HAMAP" id="MF_01954">
    <property type="entry name" value="Urease_beta"/>
    <property type="match status" value="1"/>
</dbReference>
<dbReference type="InterPro" id="IPR002019">
    <property type="entry name" value="Urease_beta-like"/>
</dbReference>
<dbReference type="InterPro" id="IPR036461">
    <property type="entry name" value="Urease_betasu_sf"/>
</dbReference>
<dbReference type="InterPro" id="IPR050069">
    <property type="entry name" value="Urease_subunit"/>
</dbReference>
<dbReference type="NCBIfam" id="NF009682">
    <property type="entry name" value="PRK13203.1"/>
    <property type="match status" value="1"/>
</dbReference>
<dbReference type="NCBIfam" id="TIGR00192">
    <property type="entry name" value="urease_beta"/>
    <property type="match status" value="1"/>
</dbReference>
<dbReference type="PANTHER" id="PTHR33569">
    <property type="entry name" value="UREASE"/>
    <property type="match status" value="1"/>
</dbReference>
<dbReference type="PANTHER" id="PTHR33569:SF1">
    <property type="entry name" value="UREASE"/>
    <property type="match status" value="1"/>
</dbReference>
<dbReference type="Pfam" id="PF00699">
    <property type="entry name" value="Urease_beta"/>
    <property type="match status" value="1"/>
</dbReference>
<dbReference type="SUPFAM" id="SSF51278">
    <property type="entry name" value="Urease, beta-subunit"/>
    <property type="match status" value="1"/>
</dbReference>
<reference key="1">
    <citation type="journal article" date="1996" name="J. Bacteriol.">
        <title>Organization of Ureaplasma urealyticum urease gene cluster and expression in a suppressor strain of Escherichia coli.</title>
        <authorList>
            <person name="Neyrolles O."/>
            <person name="Ferris S."/>
            <person name="Behbahani N."/>
            <person name="Montagnier L."/>
            <person name="Blanchard A."/>
        </authorList>
    </citation>
    <scope>NUCLEOTIDE SEQUENCE [GENOMIC DNA]</scope>
    <source>
        <strain>ATCC 27813 / 7 / Serovar 1</strain>
    </source>
</reference>
<reference key="2">
    <citation type="journal article" date="1996" name="J. Bacteriol.">
        <authorList>
            <person name="Neyrolles O."/>
            <person name="Ferris S."/>
            <person name="Behbahani N."/>
            <person name="Montagnier L."/>
            <person name="Blanchard A."/>
        </authorList>
    </citation>
    <scope>ERRATUM OF PUBMED:8550495</scope>
</reference>
<reference key="3">
    <citation type="journal article" date="1999" name="Int. J. Syst. Bacteriol.">
        <title>Phylogenetic analysis of Ureaplasma urealyticum -- support for the establishment of a new species, Ureaplasma parvum.</title>
        <authorList>
            <person name="Kong F."/>
            <person name="James G."/>
            <person name="Ma Z."/>
            <person name="Gordon S."/>
            <person name="Wang B."/>
            <person name="Gilbert G.L."/>
        </authorList>
    </citation>
    <scope>NUCLEOTIDE SEQUENCE [GENOMIC DNA]</scope>
    <source>
        <strain>ATCC 27813 / 7 / Serovar 1</strain>
        <strain>ATCC 27818 / Pi / Serovar 6</strain>
        <strain>ATCC 33697 / U26 / Serovar 14</strain>
    </source>
</reference>
<reference key="4">
    <citation type="journal article" date="2000" name="Nature">
        <title>The complete sequence of the mucosal pathogen Ureaplasma urealyticum.</title>
        <authorList>
            <person name="Glass J.I."/>
            <person name="Lefkowitz E.J."/>
            <person name="Glass J.S."/>
            <person name="Heiner C.R."/>
            <person name="Chen E.Y."/>
            <person name="Cassell G.H."/>
        </authorList>
    </citation>
    <scope>NUCLEOTIDE SEQUENCE [LARGE SCALE GENOMIC DNA]</scope>
    <source>
        <strain>ATCC 700970</strain>
    </source>
</reference>
<evidence type="ECO:0000250" key="1"/>
<evidence type="ECO:0000255" key="2">
    <source>
        <dbReference type="HAMAP-Rule" id="MF_01954"/>
    </source>
</evidence>
<gene>
    <name evidence="2" type="primary">ureB</name>
    <name type="ordered locus">UU433</name>
</gene>
<name>URE2_UREPA</name>
<accession>P0C7K8</accession>
<accession>Q56558</accession>
<sequence length="124" mass="13509">MSGSSSQFSPGKLVPGAINFASGEIVMNEGREAKVISIKNTGDRPIQVGSHFHLFEVNSALVFFDEKGNEDKERKVAYGRRFDIPSGTAIRFEPGDKKEVSIIDLAGTREVWGVNGLVNGKLKK</sequence>
<feature type="initiator methionine" description="Removed" evidence="1">
    <location>
        <position position="1"/>
    </location>
</feature>
<feature type="chain" id="PRO_0000067583" description="Urease subunit beta">
    <location>
        <begin position="2"/>
        <end position="124"/>
    </location>
</feature>